<name>PHD1_YEAST</name>
<protein>
    <recommendedName>
        <fullName>Putative transcription factor PHD1</fullName>
    </recommendedName>
</protein>
<evidence type="ECO:0000255" key="1">
    <source>
        <dbReference type="PROSITE-ProRule" id="PRU00630"/>
    </source>
</evidence>
<evidence type="ECO:0000256" key="2">
    <source>
        <dbReference type="SAM" id="MobiDB-lite"/>
    </source>
</evidence>
<evidence type="ECO:0000269" key="3">
    <source>
    </source>
</evidence>
<evidence type="ECO:0000305" key="4"/>
<keyword id="KW-0238">DNA-binding</keyword>
<keyword id="KW-0539">Nucleus</keyword>
<keyword id="KW-1185">Reference proteome</keyword>
<keyword id="KW-0804">Transcription</keyword>
<keyword id="KW-0805">Transcription regulation</keyword>
<comment type="function">
    <text>Putative transcription factor that functions in pseudohyphal growth.</text>
</comment>
<comment type="subcellular location">
    <subcellularLocation>
        <location>Nucleus</location>
    </subcellularLocation>
</comment>
<comment type="miscellaneous">
    <text evidence="3">Present with 1420 molecules/cell in log phase SD medium.</text>
</comment>
<comment type="similarity">
    <text evidence="4">Belongs to the EFG1/PHD1/stuA family.</text>
</comment>
<organism>
    <name type="scientific">Saccharomyces cerevisiae (strain ATCC 204508 / S288c)</name>
    <name type="common">Baker's yeast</name>
    <dbReference type="NCBI Taxonomy" id="559292"/>
    <lineage>
        <taxon>Eukaryota</taxon>
        <taxon>Fungi</taxon>
        <taxon>Dikarya</taxon>
        <taxon>Ascomycota</taxon>
        <taxon>Saccharomycotina</taxon>
        <taxon>Saccharomycetes</taxon>
        <taxon>Saccharomycetales</taxon>
        <taxon>Saccharomycetaceae</taxon>
        <taxon>Saccharomyces</taxon>
    </lineage>
</organism>
<gene>
    <name type="primary">PHD1</name>
    <name type="ordered locus">YKL043W</name>
    <name type="ORF">YKL256</name>
</gene>
<feature type="chain" id="PRO_0000058377" description="Putative transcription factor PHD1">
    <location>
        <begin position="1"/>
        <end position="366"/>
    </location>
</feature>
<feature type="domain" description="HTH APSES-type" evidence="1">
    <location>
        <begin position="186"/>
        <end position="292"/>
    </location>
</feature>
<feature type="DNA-binding region" description="H-T-H motif" evidence="1">
    <location>
        <begin position="220"/>
        <end position="241"/>
    </location>
</feature>
<feature type="region of interest" description="Disordered" evidence="2">
    <location>
        <begin position="294"/>
        <end position="366"/>
    </location>
</feature>
<feature type="compositionally biased region" description="Basic and acidic residues" evidence="2">
    <location>
        <begin position="312"/>
        <end position="328"/>
    </location>
</feature>
<sequence>MYHVPEMRLHYPLVNTQSNAAITPTRSYDNTLPSFNELSHQSTINLPFVQRETPNAYANVAQLATSPTQAKSGYYCRYYAVPFPTYPQQPQSPYQQAVLPYATIPNSNFQPSSFPVMAVMPPEVQFDGSFLNTLHPHTELPPIIQNTNDTSVARPNNLKSIAAASPTVTATTRTPGVSSTSVLKPRVITTMWEDENTICYQVEANGISVVRRADNNMINGTKLLNVTKMTRGRRDGILRSEKVREVVKIGSMHLKGVWIPFERAYILAQREQILDHLYPLFVKDIESIVDARKPSNKASLTPKSSPAPIKQEPSDNKHEIATEIKPKSIDALSNGASTQGAGELPHLKINHIDTEAQTSRAKNELS</sequence>
<accession>P36093</accession>
<accession>D6VXP3</accession>
<accession>Q2VQ88</accession>
<dbReference type="EMBL" id="U05241">
    <property type="protein sequence ID" value="AAA18358.1"/>
    <property type="molecule type" value="Unassigned_DNA"/>
</dbReference>
<dbReference type="EMBL" id="X71621">
    <property type="protein sequence ID" value="CAA50629.1"/>
    <property type="molecule type" value="Genomic_DNA"/>
</dbReference>
<dbReference type="EMBL" id="Z28043">
    <property type="protein sequence ID" value="CAA81878.1"/>
    <property type="molecule type" value="Genomic_DNA"/>
</dbReference>
<dbReference type="EMBL" id="AY557923">
    <property type="protein sequence ID" value="AAS56249.1"/>
    <property type="molecule type" value="Genomic_DNA"/>
</dbReference>
<dbReference type="EMBL" id="AY949939">
    <property type="protein sequence ID" value="AAY27341.1"/>
    <property type="molecule type" value="Genomic_DNA"/>
</dbReference>
<dbReference type="EMBL" id="AY949940">
    <property type="protein sequence ID" value="AAY27342.1"/>
    <property type="molecule type" value="Genomic_DNA"/>
</dbReference>
<dbReference type="EMBL" id="AY949941">
    <property type="protein sequence ID" value="AAY27343.1"/>
    <property type="molecule type" value="Genomic_DNA"/>
</dbReference>
<dbReference type="EMBL" id="AY949942">
    <property type="protein sequence ID" value="AAY27344.1"/>
    <property type="molecule type" value="Genomic_DNA"/>
</dbReference>
<dbReference type="EMBL" id="AY949943">
    <property type="protein sequence ID" value="AAY27345.1"/>
    <property type="molecule type" value="Genomic_DNA"/>
</dbReference>
<dbReference type="EMBL" id="AY949944">
    <property type="protein sequence ID" value="AAY27346.1"/>
    <property type="molecule type" value="Genomic_DNA"/>
</dbReference>
<dbReference type="EMBL" id="AY949945">
    <property type="protein sequence ID" value="AAY27347.1"/>
    <property type="molecule type" value="Genomic_DNA"/>
</dbReference>
<dbReference type="EMBL" id="AY949946">
    <property type="protein sequence ID" value="AAY27348.1"/>
    <property type="molecule type" value="Genomic_DNA"/>
</dbReference>
<dbReference type="EMBL" id="AY949947">
    <property type="protein sequence ID" value="AAY27349.1"/>
    <property type="molecule type" value="Genomic_DNA"/>
</dbReference>
<dbReference type="EMBL" id="AY949948">
    <property type="protein sequence ID" value="AAY27350.1"/>
    <property type="molecule type" value="Genomic_DNA"/>
</dbReference>
<dbReference type="EMBL" id="BK006944">
    <property type="protein sequence ID" value="DAA09113.1"/>
    <property type="molecule type" value="Genomic_DNA"/>
</dbReference>
<dbReference type="PIR" id="S37864">
    <property type="entry name" value="S37864"/>
</dbReference>
<dbReference type="RefSeq" id="NP_012881.1">
    <property type="nucleotide sequence ID" value="NM_001179609.1"/>
</dbReference>
<dbReference type="SMR" id="P36093"/>
<dbReference type="BioGRID" id="34089">
    <property type="interactions" value="103"/>
</dbReference>
<dbReference type="DIP" id="DIP-4868N"/>
<dbReference type="FunCoup" id="P36093">
    <property type="interactions" value="905"/>
</dbReference>
<dbReference type="IntAct" id="P36093">
    <property type="interactions" value="3"/>
</dbReference>
<dbReference type="STRING" id="4932.YKL043W"/>
<dbReference type="iPTMnet" id="P36093"/>
<dbReference type="PaxDb" id="4932-YKL043W"/>
<dbReference type="PeptideAtlas" id="P36093"/>
<dbReference type="EnsemblFungi" id="YKL043W_mRNA">
    <property type="protein sequence ID" value="YKL043W"/>
    <property type="gene ID" value="YKL043W"/>
</dbReference>
<dbReference type="GeneID" id="853823"/>
<dbReference type="KEGG" id="sce:YKL043W"/>
<dbReference type="AGR" id="SGD:S000001526"/>
<dbReference type="SGD" id="S000001526">
    <property type="gene designation" value="PHD1"/>
</dbReference>
<dbReference type="VEuPathDB" id="FungiDB:YKL043W"/>
<dbReference type="eggNOG" id="ENOG502QW2C">
    <property type="taxonomic scope" value="Eukaryota"/>
</dbReference>
<dbReference type="GeneTree" id="ENSGT00940000176596"/>
<dbReference type="HOGENOM" id="CLU_756942_0_0_1"/>
<dbReference type="InParanoid" id="P36093"/>
<dbReference type="OMA" id="AVPFPTX"/>
<dbReference type="OrthoDB" id="5407653at2759"/>
<dbReference type="BioCyc" id="YEAST:G3O-31844-MONOMER"/>
<dbReference type="BioGRID-ORCS" id="853823">
    <property type="hits" value="4 hits in 13 CRISPR screens"/>
</dbReference>
<dbReference type="PRO" id="PR:P36093"/>
<dbReference type="Proteomes" id="UP000002311">
    <property type="component" value="Chromosome XI"/>
</dbReference>
<dbReference type="RNAct" id="P36093">
    <property type="molecule type" value="protein"/>
</dbReference>
<dbReference type="GO" id="GO:0005634">
    <property type="term" value="C:nucleus"/>
    <property type="evidence" value="ECO:0000314"/>
    <property type="project" value="SGD"/>
</dbReference>
<dbReference type="GO" id="GO:0003700">
    <property type="term" value="F:DNA-binding transcription factor activity"/>
    <property type="evidence" value="ECO:0000315"/>
    <property type="project" value="SGD"/>
</dbReference>
<dbReference type="GO" id="GO:0043565">
    <property type="term" value="F:sequence-specific DNA binding"/>
    <property type="evidence" value="ECO:0007005"/>
    <property type="project" value="SGD"/>
</dbReference>
<dbReference type="GO" id="GO:2000222">
    <property type="term" value="P:positive regulation of pseudohyphal growth"/>
    <property type="evidence" value="ECO:0000315"/>
    <property type="project" value="SGD"/>
</dbReference>
<dbReference type="GO" id="GO:0045944">
    <property type="term" value="P:positive regulation of transcription by RNA polymerase II"/>
    <property type="evidence" value="ECO:0000315"/>
    <property type="project" value="SGD"/>
</dbReference>
<dbReference type="FunFam" id="3.10.260.10:FF:000003">
    <property type="entry name" value="Ascospore maturation 1 protein"/>
    <property type="match status" value="1"/>
</dbReference>
<dbReference type="Gene3D" id="3.10.260.10">
    <property type="entry name" value="Transcription regulator HTH, APSES-type DNA-binding domain"/>
    <property type="match status" value="1"/>
</dbReference>
<dbReference type="InterPro" id="IPR029790">
    <property type="entry name" value="EFG1/Phd1/StuA"/>
</dbReference>
<dbReference type="InterPro" id="IPR036887">
    <property type="entry name" value="HTH_APSES_sf"/>
</dbReference>
<dbReference type="InterPro" id="IPR018004">
    <property type="entry name" value="KilA/APSES_HTH"/>
</dbReference>
<dbReference type="InterPro" id="IPR003163">
    <property type="entry name" value="Tscrpt_reg_HTH_APSES-type"/>
</dbReference>
<dbReference type="PANTHER" id="PTHR47792">
    <property type="entry name" value="PROTEIN SOK2-RELATED"/>
    <property type="match status" value="1"/>
</dbReference>
<dbReference type="PANTHER" id="PTHR47792:SF1">
    <property type="entry name" value="PROTEIN SOK2-RELATED"/>
    <property type="match status" value="1"/>
</dbReference>
<dbReference type="Pfam" id="PF04383">
    <property type="entry name" value="KilA-N"/>
    <property type="match status" value="1"/>
</dbReference>
<dbReference type="SMART" id="SM01252">
    <property type="entry name" value="KilA-N"/>
    <property type="match status" value="1"/>
</dbReference>
<dbReference type="SUPFAM" id="SSF54616">
    <property type="entry name" value="DNA-binding domain of Mlu1-box binding protein MBP1"/>
    <property type="match status" value="1"/>
</dbReference>
<dbReference type="PROSITE" id="PS51299">
    <property type="entry name" value="HTH_APSES"/>
    <property type="match status" value="1"/>
</dbReference>
<proteinExistence type="evidence at protein level"/>
<reference key="1">
    <citation type="journal article" date="1994" name="Mol. Cell. Biol.">
        <title>Induction of pseudohyphal growth by overexpression of PHD1, a Saccharomyces cerevisiae gene related to transcriptional regulators of fungal development.</title>
        <authorList>
            <person name="Gimeno C.J."/>
            <person name="Fink G.R."/>
        </authorList>
    </citation>
    <scope>NUCLEOTIDE SEQUENCE</scope>
    <source>
        <strain>S288c / YPH1</strain>
    </source>
</reference>
<reference key="2">
    <citation type="journal article" date="1993" name="Yeast">
        <title>The sequence of a 17.5 kb DNA fragment on the left arm of yeast chromosome XI identifies the protein kinase gene ELM1, the DNA primase gene PRI2, a new gene encoding a putative histone and seven new open reading frames.</title>
        <authorList>
            <person name="Purnelle B."/>
            <person name="Tettelin H."/>
            <person name="van Dyck L."/>
            <person name="Skala J."/>
            <person name="Goffeau A."/>
        </authorList>
    </citation>
    <scope>NUCLEOTIDE SEQUENCE [GENOMIC DNA]</scope>
    <source>
        <strain>ATCC 204508 / S288c</strain>
    </source>
</reference>
<reference key="3">
    <citation type="journal article" date="1994" name="Nature">
        <title>Complete DNA sequence of yeast chromosome XI.</title>
        <authorList>
            <person name="Dujon B."/>
            <person name="Alexandraki D."/>
            <person name="Andre B."/>
            <person name="Ansorge W."/>
            <person name="Baladron V."/>
            <person name="Ballesta J.P.G."/>
            <person name="Banrevi A."/>
            <person name="Bolle P.-A."/>
            <person name="Bolotin-Fukuhara M."/>
            <person name="Bossier P."/>
            <person name="Bou G."/>
            <person name="Boyer J."/>
            <person name="Buitrago M.J."/>
            <person name="Cheret G."/>
            <person name="Colleaux L."/>
            <person name="Daignan-Fornier B."/>
            <person name="del Rey F."/>
            <person name="Dion C."/>
            <person name="Domdey H."/>
            <person name="Duesterhoeft A."/>
            <person name="Duesterhus S."/>
            <person name="Entian K.-D."/>
            <person name="Erfle H."/>
            <person name="Esteban P.F."/>
            <person name="Feldmann H."/>
            <person name="Fernandes L."/>
            <person name="Fobo G.M."/>
            <person name="Fritz C."/>
            <person name="Fukuhara H."/>
            <person name="Gabel C."/>
            <person name="Gaillon L."/>
            <person name="Garcia-Cantalejo J.M."/>
            <person name="Garcia-Ramirez J.J."/>
            <person name="Gent M.E."/>
            <person name="Ghazvini M."/>
            <person name="Goffeau A."/>
            <person name="Gonzalez A."/>
            <person name="Grothues D."/>
            <person name="Guerreiro P."/>
            <person name="Hegemann J.H."/>
            <person name="Hewitt N."/>
            <person name="Hilger F."/>
            <person name="Hollenberg C.P."/>
            <person name="Horaitis O."/>
            <person name="Indge K.J."/>
            <person name="Jacquier A."/>
            <person name="James C.M."/>
            <person name="Jauniaux J.-C."/>
            <person name="Jimenez A."/>
            <person name="Keuchel H."/>
            <person name="Kirchrath L."/>
            <person name="Kleine K."/>
            <person name="Koetter P."/>
            <person name="Legrain P."/>
            <person name="Liebl S."/>
            <person name="Louis E.J."/>
            <person name="Maia e Silva A."/>
            <person name="Marck C."/>
            <person name="Monnier A.-L."/>
            <person name="Moestl D."/>
            <person name="Mueller S."/>
            <person name="Obermaier B."/>
            <person name="Oliver S.G."/>
            <person name="Pallier C."/>
            <person name="Pascolo S."/>
            <person name="Pfeiffer F."/>
            <person name="Philippsen P."/>
            <person name="Planta R.J."/>
            <person name="Pohl F.M."/>
            <person name="Pohl T.M."/>
            <person name="Poehlmann R."/>
            <person name="Portetelle D."/>
            <person name="Purnelle B."/>
            <person name="Puzos V."/>
            <person name="Ramezani Rad M."/>
            <person name="Rasmussen S.W."/>
            <person name="Remacha M.A."/>
            <person name="Revuelta J.L."/>
            <person name="Richard G.-F."/>
            <person name="Rieger M."/>
            <person name="Rodrigues-Pousada C."/>
            <person name="Rose M."/>
            <person name="Rupp T."/>
            <person name="Santos M.A."/>
            <person name="Schwager C."/>
            <person name="Sensen C."/>
            <person name="Skala J."/>
            <person name="Soares H."/>
            <person name="Sor F."/>
            <person name="Stegemann J."/>
            <person name="Tettelin H."/>
            <person name="Thierry A."/>
            <person name="Tzermia M."/>
            <person name="Urrestarazu L.A."/>
            <person name="van Dyck L."/>
            <person name="van Vliet-Reedijk J.C."/>
            <person name="Valens M."/>
            <person name="Vandenbol M."/>
            <person name="Vilela C."/>
            <person name="Vissers S."/>
            <person name="von Wettstein D."/>
            <person name="Voss H."/>
            <person name="Wiemann S."/>
            <person name="Xu G."/>
            <person name="Zimmermann J."/>
            <person name="Haasemann M."/>
            <person name="Becker I."/>
            <person name="Mewes H.-W."/>
        </authorList>
    </citation>
    <scope>NUCLEOTIDE SEQUENCE [LARGE SCALE GENOMIC DNA]</scope>
    <source>
        <strain>ATCC 204508 / S288c</strain>
    </source>
</reference>
<reference key="4">
    <citation type="journal article" date="2014" name="G3 (Bethesda)">
        <title>The reference genome sequence of Saccharomyces cerevisiae: Then and now.</title>
        <authorList>
            <person name="Engel S.R."/>
            <person name="Dietrich F.S."/>
            <person name="Fisk D.G."/>
            <person name="Binkley G."/>
            <person name="Balakrishnan R."/>
            <person name="Costanzo M.C."/>
            <person name="Dwight S.S."/>
            <person name="Hitz B.C."/>
            <person name="Karra K."/>
            <person name="Nash R.S."/>
            <person name="Weng S."/>
            <person name="Wong E.D."/>
            <person name="Lloyd P."/>
            <person name="Skrzypek M.S."/>
            <person name="Miyasato S.R."/>
            <person name="Simison M."/>
            <person name="Cherry J.M."/>
        </authorList>
    </citation>
    <scope>GENOME REANNOTATION</scope>
    <source>
        <strain>ATCC 204508 / S288c</strain>
    </source>
</reference>
<reference key="5">
    <citation type="journal article" date="2007" name="Genome Res.">
        <title>Approaching a complete repository of sequence-verified protein-encoding clones for Saccharomyces cerevisiae.</title>
        <authorList>
            <person name="Hu Y."/>
            <person name="Rolfs A."/>
            <person name="Bhullar B."/>
            <person name="Murthy T.V.S."/>
            <person name="Zhu C."/>
            <person name="Berger M.F."/>
            <person name="Camargo A.A."/>
            <person name="Kelley F."/>
            <person name="McCarron S."/>
            <person name="Jepson D."/>
            <person name="Richardson A."/>
            <person name="Raphael J."/>
            <person name="Moreira D."/>
            <person name="Taycher E."/>
            <person name="Zuo D."/>
            <person name="Mohr S."/>
            <person name="Kane M.F."/>
            <person name="Williamson J."/>
            <person name="Simpson A.J.G."/>
            <person name="Bulyk M.L."/>
            <person name="Harlow E."/>
            <person name="Marsischky G."/>
            <person name="Kolodner R.D."/>
            <person name="LaBaer J."/>
        </authorList>
    </citation>
    <scope>NUCLEOTIDE SEQUENCE [GENOMIC DNA]</scope>
    <source>
        <strain>ATCC 204508 / S288c</strain>
    </source>
</reference>
<reference key="6">
    <citation type="submission" date="2005-03" db="EMBL/GenBank/DDBJ databases">
        <title>Population structure of the wine yeast Saccharomyces cerevisiae.</title>
        <authorList>
            <person name="Townsend J.P."/>
            <person name="Aa E."/>
            <person name="Taylor J.W."/>
        </authorList>
    </citation>
    <scope>NUCLEOTIDE SEQUENCE [GENOMIC DNA]</scope>
    <source>
        <strain>ATCC 76625 / YPH499</strain>
        <strain>YPS396</strain>
        <strain>YPS400</strain>
        <strain>YPS598</strain>
        <strain>YPS600</strain>
        <strain>YPS602</strain>
        <strain>YPS604</strain>
        <strain>YPS606</strain>
        <strain>YPS608</strain>
        <strain>YPS610</strain>
    </source>
</reference>
<reference key="7">
    <citation type="journal article" date="2003" name="Nature">
        <title>Global analysis of protein expression in yeast.</title>
        <authorList>
            <person name="Ghaemmaghami S."/>
            <person name="Huh W.-K."/>
            <person name="Bower K."/>
            <person name="Howson R.W."/>
            <person name="Belle A."/>
            <person name="Dephoure N."/>
            <person name="O'Shea E.K."/>
            <person name="Weissman J.S."/>
        </authorList>
    </citation>
    <scope>LEVEL OF PROTEIN EXPRESSION [LARGE SCALE ANALYSIS]</scope>
</reference>